<name>CA147_HUMAN</name>
<keyword id="KW-1185">Reference proteome</keyword>
<evidence type="ECO:0000256" key="1">
    <source>
        <dbReference type="SAM" id="MobiDB-lite"/>
    </source>
</evidence>
<evidence type="ECO:0000269" key="2">
    <source>
    </source>
</evidence>
<evidence type="ECO:0000305" key="3"/>
<evidence type="ECO:0000312" key="4">
    <source>
        <dbReference type="HGNC" id="HGNC:32061"/>
    </source>
</evidence>
<organism>
    <name type="scientific">Homo sapiens</name>
    <name type="common">Human</name>
    <dbReference type="NCBI Taxonomy" id="9606"/>
    <lineage>
        <taxon>Eukaryota</taxon>
        <taxon>Metazoa</taxon>
        <taxon>Chordata</taxon>
        <taxon>Craniata</taxon>
        <taxon>Vertebrata</taxon>
        <taxon>Euteleostomi</taxon>
        <taxon>Mammalia</taxon>
        <taxon>Eutheria</taxon>
        <taxon>Euarchontoglires</taxon>
        <taxon>Primates</taxon>
        <taxon>Haplorrhini</taxon>
        <taxon>Catarrhini</taxon>
        <taxon>Hominidae</taxon>
        <taxon>Homo</taxon>
    </lineage>
</organism>
<accession>Q96MC9</accession>
<accession>Q5JTS5</accession>
<proteinExistence type="uncertain"/>
<reference key="1">
    <citation type="journal article" date="2004" name="Nat. Genet.">
        <title>Complete sequencing and characterization of 21,243 full-length human cDNAs.</title>
        <authorList>
            <person name="Ota T."/>
            <person name="Suzuki Y."/>
            <person name="Nishikawa T."/>
            <person name="Otsuki T."/>
            <person name="Sugiyama T."/>
            <person name="Irie R."/>
            <person name="Wakamatsu A."/>
            <person name="Hayashi K."/>
            <person name="Sato H."/>
            <person name="Nagai K."/>
            <person name="Kimura K."/>
            <person name="Makita H."/>
            <person name="Sekine M."/>
            <person name="Obayashi M."/>
            <person name="Nishi T."/>
            <person name="Shibahara T."/>
            <person name="Tanaka T."/>
            <person name="Ishii S."/>
            <person name="Yamamoto J."/>
            <person name="Saito K."/>
            <person name="Kawai Y."/>
            <person name="Isono Y."/>
            <person name="Nakamura Y."/>
            <person name="Nagahari K."/>
            <person name="Murakami K."/>
            <person name="Yasuda T."/>
            <person name="Iwayanagi T."/>
            <person name="Wagatsuma M."/>
            <person name="Shiratori A."/>
            <person name="Sudo H."/>
            <person name="Hosoiri T."/>
            <person name="Kaku Y."/>
            <person name="Kodaira H."/>
            <person name="Kondo H."/>
            <person name="Sugawara M."/>
            <person name="Takahashi M."/>
            <person name="Kanda K."/>
            <person name="Yokoi T."/>
            <person name="Furuya T."/>
            <person name="Kikkawa E."/>
            <person name="Omura Y."/>
            <person name="Abe K."/>
            <person name="Kamihara K."/>
            <person name="Katsuta N."/>
            <person name="Sato K."/>
            <person name="Tanikawa M."/>
            <person name="Yamazaki M."/>
            <person name="Ninomiya K."/>
            <person name="Ishibashi T."/>
            <person name="Yamashita H."/>
            <person name="Murakawa K."/>
            <person name="Fujimori K."/>
            <person name="Tanai H."/>
            <person name="Kimata M."/>
            <person name="Watanabe M."/>
            <person name="Hiraoka S."/>
            <person name="Chiba Y."/>
            <person name="Ishida S."/>
            <person name="Ono Y."/>
            <person name="Takiguchi S."/>
            <person name="Watanabe S."/>
            <person name="Yosida M."/>
            <person name="Hotuta T."/>
            <person name="Kusano J."/>
            <person name="Kanehori K."/>
            <person name="Takahashi-Fujii A."/>
            <person name="Hara H."/>
            <person name="Tanase T.-O."/>
            <person name="Nomura Y."/>
            <person name="Togiya S."/>
            <person name="Komai F."/>
            <person name="Hara R."/>
            <person name="Takeuchi K."/>
            <person name="Arita M."/>
            <person name="Imose N."/>
            <person name="Musashino K."/>
            <person name="Yuuki H."/>
            <person name="Oshima A."/>
            <person name="Sasaki N."/>
            <person name="Aotsuka S."/>
            <person name="Yoshikawa Y."/>
            <person name="Matsunawa H."/>
            <person name="Ichihara T."/>
            <person name="Shiohata N."/>
            <person name="Sano S."/>
            <person name="Moriya S."/>
            <person name="Momiyama H."/>
            <person name="Satoh N."/>
            <person name="Takami S."/>
            <person name="Terashima Y."/>
            <person name="Suzuki O."/>
            <person name="Nakagawa S."/>
            <person name="Senoh A."/>
            <person name="Mizoguchi H."/>
            <person name="Goto Y."/>
            <person name="Shimizu F."/>
            <person name="Wakebe H."/>
            <person name="Hishigaki H."/>
            <person name="Watanabe T."/>
            <person name="Sugiyama A."/>
            <person name="Takemoto M."/>
            <person name="Kawakami B."/>
            <person name="Yamazaki M."/>
            <person name="Watanabe K."/>
            <person name="Kumagai A."/>
            <person name="Itakura S."/>
            <person name="Fukuzumi Y."/>
            <person name="Fujimori Y."/>
            <person name="Komiyama M."/>
            <person name="Tashiro H."/>
            <person name="Tanigami A."/>
            <person name="Fujiwara T."/>
            <person name="Ono T."/>
            <person name="Yamada K."/>
            <person name="Fujii Y."/>
            <person name="Ozaki K."/>
            <person name="Hirao M."/>
            <person name="Ohmori Y."/>
            <person name="Kawabata A."/>
            <person name="Hikiji T."/>
            <person name="Kobatake N."/>
            <person name="Inagaki H."/>
            <person name="Ikema Y."/>
            <person name="Okamoto S."/>
            <person name="Okitani R."/>
            <person name="Kawakami T."/>
            <person name="Noguchi S."/>
            <person name="Itoh T."/>
            <person name="Shigeta K."/>
            <person name="Senba T."/>
            <person name="Matsumura K."/>
            <person name="Nakajima Y."/>
            <person name="Mizuno T."/>
            <person name="Morinaga M."/>
            <person name="Sasaki M."/>
            <person name="Togashi T."/>
            <person name="Oyama M."/>
            <person name="Hata H."/>
            <person name="Watanabe M."/>
            <person name="Komatsu T."/>
            <person name="Mizushima-Sugano J."/>
            <person name="Satoh T."/>
            <person name="Shirai Y."/>
            <person name="Takahashi Y."/>
            <person name="Nakagawa K."/>
            <person name="Okumura K."/>
            <person name="Nagase T."/>
            <person name="Nomura N."/>
            <person name="Kikuchi H."/>
            <person name="Masuho Y."/>
            <person name="Yamashita R."/>
            <person name="Nakai K."/>
            <person name="Yada T."/>
            <person name="Nakamura Y."/>
            <person name="Ohara O."/>
            <person name="Isogai T."/>
            <person name="Sugano S."/>
        </authorList>
    </citation>
    <scope>NUCLEOTIDE SEQUENCE [LARGE SCALE MRNA]</scope>
    <scope>VARIANT ALA-213</scope>
    <source>
        <tissue>Spleen</tissue>
    </source>
</reference>
<reference key="2">
    <citation type="journal article" date="2006" name="Nature">
        <title>The DNA sequence and biological annotation of human chromosome 1.</title>
        <authorList>
            <person name="Gregory S.G."/>
            <person name="Barlow K.F."/>
            <person name="McLay K.E."/>
            <person name="Kaul R."/>
            <person name="Swarbreck D."/>
            <person name="Dunham A."/>
            <person name="Scott C.E."/>
            <person name="Howe K.L."/>
            <person name="Woodfine K."/>
            <person name="Spencer C.C.A."/>
            <person name="Jones M.C."/>
            <person name="Gillson C."/>
            <person name="Searle S."/>
            <person name="Zhou Y."/>
            <person name="Kokocinski F."/>
            <person name="McDonald L."/>
            <person name="Evans R."/>
            <person name="Phillips K."/>
            <person name="Atkinson A."/>
            <person name="Cooper R."/>
            <person name="Jones C."/>
            <person name="Hall R.E."/>
            <person name="Andrews T.D."/>
            <person name="Lloyd C."/>
            <person name="Ainscough R."/>
            <person name="Almeida J.P."/>
            <person name="Ambrose K.D."/>
            <person name="Anderson F."/>
            <person name="Andrew R.W."/>
            <person name="Ashwell R.I.S."/>
            <person name="Aubin K."/>
            <person name="Babbage A.K."/>
            <person name="Bagguley C.L."/>
            <person name="Bailey J."/>
            <person name="Beasley H."/>
            <person name="Bethel G."/>
            <person name="Bird C.P."/>
            <person name="Bray-Allen S."/>
            <person name="Brown J.Y."/>
            <person name="Brown A.J."/>
            <person name="Buckley D."/>
            <person name="Burton J."/>
            <person name="Bye J."/>
            <person name="Carder C."/>
            <person name="Chapman J.C."/>
            <person name="Clark S.Y."/>
            <person name="Clarke G."/>
            <person name="Clee C."/>
            <person name="Cobley V."/>
            <person name="Collier R.E."/>
            <person name="Corby N."/>
            <person name="Coville G.J."/>
            <person name="Davies J."/>
            <person name="Deadman R."/>
            <person name="Dunn M."/>
            <person name="Earthrowl M."/>
            <person name="Ellington A.G."/>
            <person name="Errington H."/>
            <person name="Frankish A."/>
            <person name="Frankland J."/>
            <person name="French L."/>
            <person name="Garner P."/>
            <person name="Garnett J."/>
            <person name="Gay L."/>
            <person name="Ghori M.R.J."/>
            <person name="Gibson R."/>
            <person name="Gilby L.M."/>
            <person name="Gillett W."/>
            <person name="Glithero R.J."/>
            <person name="Grafham D.V."/>
            <person name="Griffiths C."/>
            <person name="Griffiths-Jones S."/>
            <person name="Grocock R."/>
            <person name="Hammond S."/>
            <person name="Harrison E.S.I."/>
            <person name="Hart E."/>
            <person name="Haugen E."/>
            <person name="Heath P.D."/>
            <person name="Holmes S."/>
            <person name="Holt K."/>
            <person name="Howden P.J."/>
            <person name="Hunt A.R."/>
            <person name="Hunt S.E."/>
            <person name="Hunter G."/>
            <person name="Isherwood J."/>
            <person name="James R."/>
            <person name="Johnson C."/>
            <person name="Johnson D."/>
            <person name="Joy A."/>
            <person name="Kay M."/>
            <person name="Kershaw J.K."/>
            <person name="Kibukawa M."/>
            <person name="Kimberley A.M."/>
            <person name="King A."/>
            <person name="Knights A.J."/>
            <person name="Lad H."/>
            <person name="Laird G."/>
            <person name="Lawlor S."/>
            <person name="Leongamornlert D.A."/>
            <person name="Lloyd D.M."/>
            <person name="Loveland J."/>
            <person name="Lovell J."/>
            <person name="Lush M.J."/>
            <person name="Lyne R."/>
            <person name="Martin S."/>
            <person name="Mashreghi-Mohammadi M."/>
            <person name="Matthews L."/>
            <person name="Matthews N.S.W."/>
            <person name="McLaren S."/>
            <person name="Milne S."/>
            <person name="Mistry S."/>
            <person name="Moore M.J.F."/>
            <person name="Nickerson T."/>
            <person name="O'Dell C.N."/>
            <person name="Oliver K."/>
            <person name="Palmeiri A."/>
            <person name="Palmer S.A."/>
            <person name="Parker A."/>
            <person name="Patel D."/>
            <person name="Pearce A.V."/>
            <person name="Peck A.I."/>
            <person name="Pelan S."/>
            <person name="Phelps K."/>
            <person name="Phillimore B.J."/>
            <person name="Plumb R."/>
            <person name="Rajan J."/>
            <person name="Raymond C."/>
            <person name="Rouse G."/>
            <person name="Saenphimmachak C."/>
            <person name="Sehra H.K."/>
            <person name="Sheridan E."/>
            <person name="Shownkeen R."/>
            <person name="Sims S."/>
            <person name="Skuce C.D."/>
            <person name="Smith M."/>
            <person name="Steward C."/>
            <person name="Subramanian S."/>
            <person name="Sycamore N."/>
            <person name="Tracey A."/>
            <person name="Tromans A."/>
            <person name="Van Helmond Z."/>
            <person name="Wall M."/>
            <person name="Wallis J.M."/>
            <person name="White S."/>
            <person name="Whitehead S.L."/>
            <person name="Wilkinson J.E."/>
            <person name="Willey D.L."/>
            <person name="Williams H."/>
            <person name="Wilming L."/>
            <person name="Wray P.W."/>
            <person name="Wu Z."/>
            <person name="Coulson A."/>
            <person name="Vaudin M."/>
            <person name="Sulston J.E."/>
            <person name="Durbin R.M."/>
            <person name="Hubbard T."/>
            <person name="Wooster R."/>
            <person name="Dunham I."/>
            <person name="Carter N.P."/>
            <person name="McVean G."/>
            <person name="Ross M.T."/>
            <person name="Harrow J."/>
            <person name="Olson M.V."/>
            <person name="Beck S."/>
            <person name="Rogers J."/>
            <person name="Bentley D.R."/>
        </authorList>
    </citation>
    <scope>NUCLEOTIDE SEQUENCE [LARGE SCALE GENOMIC DNA]</scope>
</reference>
<feature type="chain" id="PRO_0000247129" description="Putative uncharacterized protein IKBKE-AS1">
    <location>
        <begin position="1"/>
        <end position="270"/>
    </location>
</feature>
<feature type="region of interest" description="Disordered" evidence="1">
    <location>
        <begin position="22"/>
        <end position="42"/>
    </location>
</feature>
<feature type="compositionally biased region" description="Basic and acidic residues" evidence="1">
    <location>
        <begin position="22"/>
        <end position="31"/>
    </location>
</feature>
<feature type="sequence variant" id="VAR_027074" description="In dbSNP:rs2336940." evidence="2">
    <original>G</original>
    <variation>A</variation>
    <location>
        <position position="213"/>
    </location>
</feature>
<feature type="sequence variant" id="VAR_027075" description="In dbSNP:rs11118256.">
    <original>P</original>
    <variation>S</variation>
    <location>
        <position position="233"/>
    </location>
</feature>
<feature type="sequence variant" id="VAR_027076" description="In dbSNP:rs17024805.">
    <original>T</original>
    <variation>M</variation>
    <location>
        <position position="259"/>
    </location>
</feature>
<dbReference type="EMBL" id="AK057159">
    <property type="protein sequence ID" value="BAB71372.1"/>
    <property type="molecule type" value="mRNA"/>
</dbReference>
<dbReference type="EMBL" id="AL354681">
    <property type="protein sequence ID" value="CAI15251.1"/>
    <property type="molecule type" value="Genomic_DNA"/>
</dbReference>
<dbReference type="BioMuta" id="HGNC:32061"/>
<dbReference type="MassIVE" id="Q96MC9"/>
<dbReference type="ProteomicsDB" id="77334"/>
<dbReference type="AGR" id="HGNC:32061"/>
<dbReference type="GeneCards" id="IKBKE-AS1"/>
<dbReference type="HGNC" id="HGNC:32061">
    <property type="gene designation" value="IKBKE-AS1"/>
</dbReference>
<dbReference type="neXtProt" id="NX_Q96MC9"/>
<dbReference type="InParanoid" id="Q96MC9"/>
<dbReference type="PAN-GO" id="Q96MC9">
    <property type="GO annotations" value="0 GO annotations based on evolutionary models"/>
</dbReference>
<dbReference type="PhylomeDB" id="Q96MC9"/>
<dbReference type="TreeFam" id="TF341548"/>
<dbReference type="PathwayCommons" id="Q96MC9"/>
<dbReference type="Pharos" id="Q96MC9">
    <property type="development level" value="Tdark"/>
</dbReference>
<dbReference type="Proteomes" id="UP000005640">
    <property type="component" value="Unplaced"/>
</dbReference>
<dbReference type="RNAct" id="Q96MC9">
    <property type="molecule type" value="protein"/>
</dbReference>
<protein>
    <recommendedName>
        <fullName>Putative uncharacterized protein IKBKE-AS1</fullName>
    </recommendedName>
    <alternativeName>
        <fullName evidence="4">IKBKE antisense RNA 1</fullName>
    </alternativeName>
    <alternativeName>
        <fullName>Uncharacterized protein C1orf147</fullName>
    </alternativeName>
</protein>
<sequence>MQGNNLQPPSPRPLECWSLHREAPQRTEASRTHPSPFLALPGSHRTANQAQVVPGLVHHPQENTQRLRIRAGLSPFPRARLAAIGSTHGHRWVPGICLPRCLCPASCALHACPPHCNNAEAHSWLRLGGPLQSRSVEHQQHACGWGWVTHATYGERGTSQAAERQRIAHTRALSVGNCPRSHFQCEFSSISKWSEGTGTFSPRPRAVKSGVGGQPSPHIRITWRSCTTLTSKPCSRAITPECVVGWSRRSRHWYSDMRTGECQGLSPITR</sequence>
<comment type="caution">
    <text evidence="3">Product of a dubious gene prediction. May be a non-coding RNA.</text>
</comment>
<gene>
    <name evidence="4" type="primary">IKBKE-AS1</name>
    <name type="synonym">C1orf147</name>
</gene>